<comment type="miscellaneous">
    <text>On the 2D-gel the determined pI of this unknown protein is: 5.2, its MW is: 50 kDa.</text>
</comment>
<dbReference type="InParanoid" id="P38644"/>
<dbReference type="Proteomes" id="UP000000589">
    <property type="component" value="Unplaced"/>
</dbReference>
<reference key="1">
    <citation type="journal article" date="1994" name="Electrophoresis">
        <title>Separation and sequencing of familiar and novel murine proteins using preparative two-dimensional gel electrophoresis.</title>
        <authorList>
            <person name="Merrick B.A."/>
            <person name="Patterson R.M."/>
            <person name="Wichter L.L."/>
            <person name="He C."/>
            <person name="Selkirk J.K."/>
        </authorList>
    </citation>
    <scope>PROTEIN SEQUENCE</scope>
    <source>
        <tissue>Fibroblast</tissue>
    </source>
</reference>
<accession>P38644</accession>
<feature type="chain" id="PRO_0000055552" description="Unknown protein from 2D-PAGE of fibroblasts">
    <location>
        <begin position="1"/>
        <end position="8" status="greater than"/>
    </location>
</feature>
<feature type="non-terminal residue">
    <location>
        <position position="8"/>
    </location>
</feature>
<protein>
    <recommendedName>
        <fullName>Unknown protein from 2D-PAGE of fibroblasts</fullName>
    </recommendedName>
    <alternativeName>
        <fullName>P50</fullName>
    </alternativeName>
</protein>
<sequence length="8" mass="817">HSEPGGAY</sequence>
<proteinExistence type="evidence at protein level"/>
<organism>
    <name type="scientific">Mus musculus</name>
    <name type="common">Mouse</name>
    <dbReference type="NCBI Taxonomy" id="10090"/>
    <lineage>
        <taxon>Eukaryota</taxon>
        <taxon>Metazoa</taxon>
        <taxon>Chordata</taxon>
        <taxon>Craniata</taxon>
        <taxon>Vertebrata</taxon>
        <taxon>Euteleostomi</taxon>
        <taxon>Mammalia</taxon>
        <taxon>Eutheria</taxon>
        <taxon>Euarchontoglires</taxon>
        <taxon>Glires</taxon>
        <taxon>Rodentia</taxon>
        <taxon>Myomorpha</taxon>
        <taxon>Muroidea</taxon>
        <taxon>Muridae</taxon>
        <taxon>Murinae</taxon>
        <taxon>Mus</taxon>
        <taxon>Mus</taxon>
    </lineage>
</organism>
<name>UF06_MOUSE</name>
<keyword id="KW-0903">Direct protein sequencing</keyword>
<keyword id="KW-1185">Reference proteome</keyword>